<keyword id="KW-0903">Direct protein sequencing</keyword>
<keyword id="KW-0964">Secreted</keyword>
<keyword id="KW-0732">Signal</keyword>
<keyword id="KW-0800">Toxin</keyword>
<sequence>MSKVILLCLIFALFACSISALSKNKNCLKLGQKCNFEKKRCCTGLNCYISQNKCLPVKL</sequence>
<organism>
    <name type="scientific">Doratifera vulnerans</name>
    <name type="common">Mottled cup moth</name>
    <dbReference type="NCBI Taxonomy" id="1372962"/>
    <lineage>
        <taxon>Eukaryota</taxon>
        <taxon>Metazoa</taxon>
        <taxon>Ecdysozoa</taxon>
        <taxon>Arthropoda</taxon>
        <taxon>Hexapoda</taxon>
        <taxon>Insecta</taxon>
        <taxon>Pterygota</taxon>
        <taxon>Neoptera</taxon>
        <taxon>Endopterygota</taxon>
        <taxon>Lepidoptera</taxon>
        <taxon>Glossata</taxon>
        <taxon>Ditrysia</taxon>
        <taxon>Zygaenoidea</taxon>
        <taxon>Limacodidae</taxon>
        <taxon>Doratifera</taxon>
    </lineage>
</organism>
<protein>
    <recommendedName>
        <fullName evidence="2">U-limacoditoxin(3)-Dv33</fullName>
        <shortName evidence="2">U-LCTX(3)-Dv33</shortName>
    </recommendedName>
    <alternativeName>
        <fullName evidence="2">Cecropin-like peptide</fullName>
    </alternativeName>
    <alternativeName>
        <fullName evidence="2">Vulnericin</fullName>
    </alternativeName>
</protein>
<name>U333_DORVU</name>
<proteinExistence type="evidence at protein level"/>
<dbReference type="SMR" id="P0DUS9"/>
<dbReference type="GO" id="GO:0005576">
    <property type="term" value="C:extracellular region"/>
    <property type="evidence" value="ECO:0007669"/>
    <property type="project" value="UniProtKB-SubCell"/>
</dbReference>
<dbReference type="GO" id="GO:0090729">
    <property type="term" value="F:toxin activity"/>
    <property type="evidence" value="ECO:0007669"/>
    <property type="project" value="UniProtKB-KW"/>
</dbReference>
<accession>P0DUS9</accession>
<evidence type="ECO:0000269" key="1">
    <source>
    </source>
</evidence>
<evidence type="ECO:0000303" key="2">
    <source>
    </source>
</evidence>
<evidence type="ECO:0000305" key="3"/>
<evidence type="ECO:0000305" key="4">
    <source>
    </source>
</evidence>
<reference key="1">
    <citation type="journal article" date="2021" name="Proc. Natl. Acad. Sci. U.S.A.">
        <title>Production, composition, and mode of action of the painful defensive venom produced by a limacodid caterpillar, Doratifera vulnerans.</title>
        <authorList>
            <person name="Walker A.A."/>
            <person name="Robinson S.D."/>
            <person name="Paluzzi J.V."/>
            <person name="Merritt D.J."/>
            <person name="Nixon S.A."/>
            <person name="Schroeder C.I."/>
            <person name="Jin J."/>
            <person name="Goudarzi M.H."/>
            <person name="Kotze A.C."/>
            <person name="Dekan Z."/>
            <person name="Sombke A."/>
            <person name="Alewood P.F."/>
            <person name="Fry B.G."/>
            <person name="Epstein M.E."/>
            <person name="Vetter I."/>
            <person name="King G.F."/>
        </authorList>
    </citation>
    <scope>NUCLEOTIDE SEQUENCE [MRNA]</scope>
    <scope>PROTEIN SEQUENCE OF 20-59</scope>
    <scope>FUNCTION</scope>
    <scope>SUBCELLULAR LOCATION</scope>
    <scope>RECOMBINANT EXPRESSION</scope>
    <scope>IDENTIFICATION BY MASS SPECTROMETRY</scope>
    <source>
        <tissue>Venom</tissue>
    </source>
</reference>
<feature type="signal peptide" evidence="1">
    <location>
        <begin position="1"/>
        <end position="19"/>
    </location>
</feature>
<feature type="peptide" id="PRO_0000453405" description="U-limacoditoxin(3)-Dv33" evidence="1">
    <location>
        <begin position="20"/>
        <end position="59"/>
    </location>
</feature>
<feature type="sequence conflict" description="In Ref. 1; AA sequence." evidence="4" ref="1">
    <original>A</original>
    <variation>G</variation>
    <location>
        <position position="20"/>
    </location>
</feature>
<comment type="function">
    <text evidence="1">Probable toxin. Shows a relatively potent antiparasitic activity against the major pathogenic nematode of ruminants (H.contortus, EC(50)=2.6 uM). Does not show insecticidal and antimicrobial activities. Does not induce increase in intracellular calcium in mouse DRG neurons, suggesting that it does not induce pain.</text>
</comment>
<comment type="subcellular location">
    <subcellularLocation>
        <location evidence="1">Secreted</location>
    </subcellularLocation>
</comment>
<comment type="tissue specificity">
    <text evidence="4">Expressed by the venom secretory cell of the spine. The spine is a cuticular structure containing a single large nucleated venom-secreting cell at its base. It is an independent unit capable of producing, storing and injecting venom. On the back of D.vulnerans caterpillars, spines are grouped together by 50 to 100 to form scoli, of which there are eight in D.vulnerans.</text>
</comment>
<comment type="developmental stage">
    <text evidence="1">Only secreted by larvae. Adult moth do not have spines.</text>
</comment>
<comment type="PTM">
    <text evidence="4">The natural peptide is not amidated. The recombinant peptide is amidated.</text>
</comment>
<comment type="similarity">
    <text evidence="3">Belongs to the limacoditoxin-3 family.</text>
</comment>